<name>FAR5_NAMOO</name>
<feature type="peptide" id="PRO_0000420500" description="Extended FMRFamide-5">
    <location>
        <begin position="1"/>
        <end position="8"/>
    </location>
</feature>
<feature type="modified residue" description="Leucine amide" evidence="3">
    <location>
        <position position="8"/>
    </location>
</feature>
<feature type="unsure residue" description="L or I" evidence="3">
    <location>
        <position position="6"/>
    </location>
</feature>
<feature type="unsure residue" description="L or I" evidence="3">
    <location>
        <position position="8"/>
    </location>
</feature>
<organism>
    <name type="scientific">Namaquaphasma ookiepense</name>
    <name type="common">Gladiator bug</name>
    <dbReference type="NCBI Taxonomy" id="409167"/>
    <lineage>
        <taxon>Eukaryota</taxon>
        <taxon>Metazoa</taxon>
        <taxon>Ecdysozoa</taxon>
        <taxon>Arthropoda</taxon>
        <taxon>Hexapoda</taxon>
        <taxon>Insecta</taxon>
        <taxon>Pterygota</taxon>
        <taxon>Neoptera</taxon>
        <taxon>Polyneoptera</taxon>
        <taxon>Mantophasmatodea</taxon>
        <taxon>Austrophasmatidae</taxon>
        <taxon>Namaquaphasma</taxon>
    </lineage>
</organism>
<reference evidence="5" key="1">
    <citation type="journal article" date="2012" name="Syst. Biol.">
        <title>Peptidomics-based phylogeny and biogeography of Mantophasmatodea (Hexapoda).</title>
        <authorList>
            <person name="Predel R."/>
            <person name="Neupert S."/>
            <person name="Huetteroth W."/>
            <person name="Kahnt J."/>
            <person name="Waidelich D."/>
            <person name="Roth S."/>
        </authorList>
    </citation>
    <scope>PROTEIN SEQUENCE</scope>
    <scope>AMIDATION AT LEU-8</scope>
    <source>
        <tissue evidence="3">Thoracic perisympathetic organs</tissue>
    </source>
</reference>
<keyword id="KW-0027">Amidation</keyword>
<keyword id="KW-0903">Direct protein sequencing</keyword>
<keyword id="KW-0527">Neuropeptide</keyword>
<keyword id="KW-0964">Secreted</keyword>
<sequence length="8" mass="1034">TDRNFLRL</sequence>
<evidence type="ECO:0000250" key="1">
    <source>
        <dbReference type="UniProtKB" id="P34405"/>
    </source>
</evidence>
<evidence type="ECO:0000255" key="2"/>
<evidence type="ECO:0000269" key="3">
    <source>
    </source>
</evidence>
<evidence type="ECO:0000303" key="4">
    <source>
    </source>
</evidence>
<evidence type="ECO:0000305" key="5"/>
<evidence type="ECO:0000305" key="6">
    <source>
    </source>
</evidence>
<accession>B0M2T5</accession>
<dbReference type="GO" id="GO:0005576">
    <property type="term" value="C:extracellular region"/>
    <property type="evidence" value="ECO:0007669"/>
    <property type="project" value="UniProtKB-SubCell"/>
</dbReference>
<dbReference type="GO" id="GO:0007218">
    <property type="term" value="P:neuropeptide signaling pathway"/>
    <property type="evidence" value="ECO:0007669"/>
    <property type="project" value="UniProtKB-KW"/>
</dbReference>
<proteinExistence type="evidence at protein level"/>
<comment type="function">
    <text evidence="1">FMRFamides and FMRFamide-like peptides are neuropeptides.</text>
</comment>
<comment type="subcellular location">
    <subcellularLocation>
        <location evidence="6">Secreted</location>
    </subcellularLocation>
</comment>
<comment type="similarity">
    <text evidence="2">Belongs to the FARP (FMRF amide related peptide) family.</text>
</comment>
<protein>
    <recommendedName>
        <fullName>Extended FMRFamide-5</fullName>
        <shortName evidence="4">FMRFa-5</shortName>
    </recommendedName>
</protein>